<comment type="function">
    <text evidence="1 4">Receptor for angiotensin II, a vasoconstricting peptide, which acts as a key regulator of blood pressure and sodium retention by the kidney (PubMed:8355665). The activated receptor in turn couples to G-alpha proteins G(q) (GNAQ, GNA11, GNA14 or GNA15) and thus activates phospholipase C and increases the cytosolic Ca(2+) concentrations, which in turn triggers cellular responses such as stimulation of protein kinase C (By similarity).</text>
</comment>
<comment type="subcellular location">
    <subcellularLocation>
        <location evidence="1">Cell membrane</location>
        <topology evidence="1">Multi-pass membrane protein</topology>
    </subcellularLocation>
</comment>
<comment type="tissue specificity">
    <text evidence="4">Heart membranes, follicular oocytes.</text>
</comment>
<comment type="PTM">
    <text evidence="1">C-terminal Ser or Thr residues may be phosphorylated.</text>
</comment>
<comment type="similarity">
    <text evidence="3">Belongs to the G-protein coupled receptor 1 family.</text>
</comment>
<dbReference type="EMBL" id="U01155">
    <property type="protein sequence ID" value="AAC59635.1"/>
    <property type="molecule type" value="mRNA"/>
</dbReference>
<dbReference type="EMBL" id="BC169667">
    <property type="protein sequence ID" value="AAI69667.1"/>
    <property type="molecule type" value="mRNA"/>
</dbReference>
<dbReference type="RefSeq" id="NP_001079250.1">
    <property type="nucleotide sequence ID" value="NM_001085781.1"/>
</dbReference>
<dbReference type="SMR" id="P35373"/>
<dbReference type="GlyCosmos" id="P35373">
    <property type="glycosylation" value="2 sites, No reported glycans"/>
</dbReference>
<dbReference type="AGR" id="Xenbase:XB-GENE-5969923"/>
<dbReference type="Xenbase" id="XB-GENE-5969923">
    <property type="gene designation" value="agtr1.S"/>
</dbReference>
<dbReference type="OMA" id="QVFHFMQ"/>
<dbReference type="OrthoDB" id="8804420at2759"/>
<dbReference type="Proteomes" id="UP000186698">
    <property type="component" value="Unplaced"/>
</dbReference>
<dbReference type="Bgee" id="378523">
    <property type="expression patterns" value="Expressed in muscle tissue and 5 other cell types or tissues"/>
</dbReference>
<dbReference type="GO" id="GO:0009897">
    <property type="term" value="C:external side of plasma membrane"/>
    <property type="evidence" value="ECO:0000318"/>
    <property type="project" value="GO_Central"/>
</dbReference>
<dbReference type="GO" id="GO:0005886">
    <property type="term" value="C:plasma membrane"/>
    <property type="evidence" value="ECO:0000250"/>
    <property type="project" value="UniProtKB"/>
</dbReference>
<dbReference type="GO" id="GO:0001595">
    <property type="term" value="F:angiotensin receptor activity"/>
    <property type="evidence" value="ECO:0000314"/>
    <property type="project" value="UniProtKB"/>
</dbReference>
<dbReference type="GO" id="GO:0004945">
    <property type="term" value="F:angiotensin type II receptor activity"/>
    <property type="evidence" value="ECO:0007669"/>
    <property type="project" value="InterPro"/>
</dbReference>
<dbReference type="GO" id="GO:0019957">
    <property type="term" value="F:C-C chemokine binding"/>
    <property type="evidence" value="ECO:0000318"/>
    <property type="project" value="GO_Central"/>
</dbReference>
<dbReference type="GO" id="GO:0016493">
    <property type="term" value="F:C-C chemokine receptor activity"/>
    <property type="evidence" value="ECO:0000318"/>
    <property type="project" value="GO_Central"/>
</dbReference>
<dbReference type="GO" id="GO:0019722">
    <property type="term" value="P:calcium-mediated signaling"/>
    <property type="evidence" value="ECO:0000318"/>
    <property type="project" value="GO_Central"/>
</dbReference>
<dbReference type="GO" id="GO:0006955">
    <property type="term" value="P:immune response"/>
    <property type="evidence" value="ECO:0000318"/>
    <property type="project" value="GO_Central"/>
</dbReference>
<dbReference type="GO" id="GO:0030593">
    <property type="term" value="P:neutrophil chemotaxis"/>
    <property type="evidence" value="ECO:0000318"/>
    <property type="project" value="GO_Central"/>
</dbReference>
<dbReference type="GO" id="GO:0086097">
    <property type="term" value="P:phospholipase C-activating angiotensin-activated signaling pathway"/>
    <property type="evidence" value="ECO:0000314"/>
    <property type="project" value="UniProtKB"/>
</dbReference>
<dbReference type="GO" id="GO:0007204">
    <property type="term" value="P:positive regulation of cytosolic calcium ion concentration"/>
    <property type="evidence" value="ECO:0000318"/>
    <property type="project" value="GO_Central"/>
</dbReference>
<dbReference type="GO" id="GO:0019229">
    <property type="term" value="P:regulation of vasoconstriction"/>
    <property type="evidence" value="ECO:0007669"/>
    <property type="project" value="InterPro"/>
</dbReference>
<dbReference type="CDD" id="cd15192">
    <property type="entry name" value="7tmA_AT1R"/>
    <property type="match status" value="1"/>
</dbReference>
<dbReference type="FunFam" id="1.20.1070.10:FF:000088">
    <property type="entry name" value="Angiotensin II receptor type 1"/>
    <property type="match status" value="1"/>
</dbReference>
<dbReference type="Gene3D" id="1.20.1070.10">
    <property type="entry name" value="Rhodopsin 7-helix transmembrane proteins"/>
    <property type="match status" value="1"/>
</dbReference>
<dbReference type="InterPro" id="IPR000190">
    <property type="entry name" value="ATII_AT1_rcpt"/>
</dbReference>
<dbReference type="InterPro" id="IPR000248">
    <property type="entry name" value="ATII_rcpt"/>
</dbReference>
<dbReference type="InterPro" id="IPR050119">
    <property type="entry name" value="CCR1-9-like"/>
</dbReference>
<dbReference type="InterPro" id="IPR000276">
    <property type="entry name" value="GPCR_Rhodpsn"/>
</dbReference>
<dbReference type="InterPro" id="IPR017452">
    <property type="entry name" value="GPCR_Rhodpsn_7TM"/>
</dbReference>
<dbReference type="PANTHER" id="PTHR10489">
    <property type="entry name" value="CELL ADHESION MOLECULE"/>
    <property type="match status" value="1"/>
</dbReference>
<dbReference type="PANTHER" id="PTHR10489:SF956">
    <property type="entry name" value="TYPE-1 ANGIOTENSIN II RECEPTOR A"/>
    <property type="match status" value="1"/>
</dbReference>
<dbReference type="Pfam" id="PF00001">
    <property type="entry name" value="7tm_1"/>
    <property type="match status" value="1"/>
</dbReference>
<dbReference type="PRINTS" id="PR00241">
    <property type="entry name" value="ANGIOTENSINR"/>
</dbReference>
<dbReference type="PRINTS" id="PR00635">
    <property type="entry name" value="ANGIOTENSN1R"/>
</dbReference>
<dbReference type="PRINTS" id="PR00237">
    <property type="entry name" value="GPCRRHODOPSN"/>
</dbReference>
<dbReference type="SMART" id="SM01381">
    <property type="entry name" value="7TM_GPCR_Srsx"/>
    <property type="match status" value="1"/>
</dbReference>
<dbReference type="SUPFAM" id="SSF81321">
    <property type="entry name" value="Family A G protein-coupled receptor-like"/>
    <property type="match status" value="1"/>
</dbReference>
<dbReference type="PROSITE" id="PS00237">
    <property type="entry name" value="G_PROTEIN_RECEP_F1_1"/>
    <property type="match status" value="1"/>
</dbReference>
<dbReference type="PROSITE" id="PS50262">
    <property type="entry name" value="G_PROTEIN_RECEP_F1_2"/>
    <property type="match status" value="1"/>
</dbReference>
<protein>
    <recommendedName>
        <fullName>Type-1 angiotensin II receptor B</fullName>
    </recommendedName>
    <alternativeName>
        <fullName>Angiotensin 2 receptor, type 1-B</fullName>
    </alternativeName>
    <alternativeName>
        <fullName>Angiotensin II receptor, type 1-B</fullName>
    </alternativeName>
    <alternativeName>
        <fullName>Angiotensin type 1 receptor</fullName>
        <shortName>AT1 receptor 1</shortName>
        <shortName>XAT-1</shortName>
    </alternativeName>
</protein>
<reference key="1">
    <citation type="journal article" date="1993" name="Mol. Pharmacol.">
        <title>Isolation and expression of a novel angiotensin II receptor from Xenopus laevis heart.</title>
        <authorList>
            <person name="Bergsma D.J."/>
            <person name="Ellis C."/>
            <person name="Nuthulaganti P.R."/>
            <person name="Nambi P."/>
            <person name="Scaife K."/>
            <person name="Kumar C."/>
            <person name="Aiyar N."/>
        </authorList>
    </citation>
    <scope>NUCLEOTIDE SEQUENCE [MRNA]</scope>
    <scope>FUNCTION</scope>
    <scope>TISSUE SPECIFICITY</scope>
    <source>
        <tissue>Heart</tissue>
    </source>
</reference>
<reference key="2">
    <citation type="submission" date="2008-11" db="EMBL/GenBank/DDBJ databases">
        <authorList>
            <consortium name="NIH - Xenopus Gene Collection (XGC) project"/>
        </authorList>
    </citation>
    <scope>NUCLEOTIDE SEQUENCE [LARGE SCALE MRNA]</scope>
</reference>
<sequence>MLSNISAGENSEVEKIVVKCSKSGMHNYIFITIPIIYSTIFVVGVFGNSLVVIVIYSYMKMKTMASVFLMNLALSDLCFVITLPLWAVYTAMHYHWPFGDLLCKIASTAITLNLYTTVFLLTCLSIDRYSAIVHPMKSRIRRTVMVARLTCVGIWLVAFLASLPSVIYRQIFIFPDTNQTVCALVYHSGHIYFMVGMSLVKNIVGFFIPFVIILTSYTLIGKTLKEVYRAQRARNDDIFKMIVAVVLLFFFCWIPHQVFTFLDVLIQMDVIQNCKMYDIVDTGMPITICIAYFNSCLNPFLYGFFGKKFRKHFLQLIKYIPPKMRTHASVNTKSSTVSQRLSDTKCASNKIALWIFDIEEHCK</sequence>
<evidence type="ECO:0000250" key="1">
    <source>
        <dbReference type="UniProtKB" id="P30556"/>
    </source>
</evidence>
<evidence type="ECO:0000255" key="2"/>
<evidence type="ECO:0000255" key="3">
    <source>
        <dbReference type="PROSITE-ProRule" id="PRU00521"/>
    </source>
</evidence>
<evidence type="ECO:0000269" key="4">
    <source>
    </source>
</evidence>
<proteinExistence type="evidence at transcript level"/>
<organism>
    <name type="scientific">Xenopus laevis</name>
    <name type="common">African clawed frog</name>
    <dbReference type="NCBI Taxonomy" id="8355"/>
    <lineage>
        <taxon>Eukaryota</taxon>
        <taxon>Metazoa</taxon>
        <taxon>Chordata</taxon>
        <taxon>Craniata</taxon>
        <taxon>Vertebrata</taxon>
        <taxon>Euteleostomi</taxon>
        <taxon>Amphibia</taxon>
        <taxon>Batrachia</taxon>
        <taxon>Anura</taxon>
        <taxon>Pipoidea</taxon>
        <taxon>Pipidae</taxon>
        <taxon>Xenopodinae</taxon>
        <taxon>Xenopus</taxon>
        <taxon>Xenopus</taxon>
    </lineage>
</organism>
<gene>
    <name type="primary">agtr1-b</name>
</gene>
<accession>P35373</accession>
<accession>B7ZQ36</accession>
<name>AGTRB_XENLA</name>
<keyword id="KW-1003">Cell membrane</keyword>
<keyword id="KW-1015">Disulfide bond</keyword>
<keyword id="KW-0297">G-protein coupled receptor</keyword>
<keyword id="KW-0325">Glycoprotein</keyword>
<keyword id="KW-0449">Lipoprotein</keyword>
<keyword id="KW-0472">Membrane</keyword>
<keyword id="KW-0564">Palmitate</keyword>
<keyword id="KW-0597">Phosphoprotein</keyword>
<keyword id="KW-0675">Receptor</keyword>
<keyword id="KW-1185">Reference proteome</keyword>
<keyword id="KW-0807">Transducer</keyword>
<keyword id="KW-0812">Transmembrane</keyword>
<keyword id="KW-1133">Transmembrane helix</keyword>
<feature type="chain" id="PRO_0000069166" description="Type-1 angiotensin II receptor B">
    <location>
        <begin position="1"/>
        <end position="363"/>
    </location>
</feature>
<feature type="topological domain" description="Extracellular" evidence="1">
    <location>
        <begin position="1"/>
        <end position="27"/>
    </location>
</feature>
<feature type="transmembrane region" description="Helical; Name=1" evidence="1">
    <location>
        <begin position="28"/>
        <end position="57"/>
    </location>
</feature>
<feature type="topological domain" description="Cytoplasmic" evidence="1">
    <location>
        <begin position="58"/>
        <end position="63"/>
    </location>
</feature>
<feature type="transmembrane region" description="Helical; Name=2" evidence="1">
    <location>
        <begin position="64"/>
        <end position="91"/>
    </location>
</feature>
<feature type="topological domain" description="Extracellular" evidence="1">
    <location>
        <begin position="92"/>
        <end position="100"/>
    </location>
</feature>
<feature type="transmembrane region" description="Helical; Name=3" evidence="1">
    <location>
        <begin position="101"/>
        <end position="127"/>
    </location>
</feature>
<feature type="topological domain" description="Cytoplasmic" evidence="1">
    <location>
        <begin position="128"/>
        <end position="143"/>
    </location>
</feature>
<feature type="transmembrane region" description="Helical; Name=4" evidence="1">
    <location>
        <begin position="144"/>
        <end position="167"/>
    </location>
</feature>
<feature type="topological domain" description="Extracellular" evidence="1">
    <location>
        <begin position="168"/>
        <end position="192"/>
    </location>
</feature>
<feature type="transmembrane region" description="Helical; Name=5" evidence="1">
    <location>
        <begin position="193"/>
        <end position="218"/>
    </location>
</feature>
<feature type="topological domain" description="Cytoplasmic" evidence="1">
    <location>
        <begin position="219"/>
        <end position="239"/>
    </location>
</feature>
<feature type="transmembrane region" description="Helical; Name=6" evidence="1">
    <location>
        <begin position="240"/>
        <end position="268"/>
    </location>
</feature>
<feature type="topological domain" description="Extracellular" evidence="1">
    <location>
        <begin position="269"/>
        <end position="278"/>
    </location>
</feature>
<feature type="transmembrane region" description="Helical; Name=7" evidence="1">
    <location>
        <begin position="279"/>
        <end position="304"/>
    </location>
</feature>
<feature type="topological domain" description="Cytoplasmic" evidence="1">
    <location>
        <begin position="305"/>
        <end position="363"/>
    </location>
</feature>
<feature type="binding site" evidence="1">
    <location>
        <position position="169"/>
    </location>
    <ligand>
        <name>angiotensin II</name>
        <dbReference type="ChEBI" id="CHEBI:58506"/>
    </ligand>
</feature>
<feature type="binding site" evidence="1">
    <location>
        <position position="186"/>
    </location>
    <ligand>
        <name>angiotensin II</name>
        <dbReference type="ChEBI" id="CHEBI:58506"/>
    </ligand>
</feature>
<feature type="binding site" evidence="1">
    <location>
        <position position="201"/>
    </location>
    <ligand>
        <name>angiotensin II</name>
        <dbReference type="ChEBI" id="CHEBI:58506"/>
    </ligand>
</feature>
<feature type="lipid moiety-binding region" description="S-palmitoyl cysteine" evidence="2">
    <location>
        <position position="346"/>
    </location>
</feature>
<feature type="lipid moiety-binding region" description="S-palmitoyl cysteine" evidence="2">
    <location>
        <position position="362"/>
    </location>
</feature>
<feature type="glycosylation site" description="N-linked (GlcNAc...) asparagine" evidence="2">
    <location>
        <position position="4"/>
    </location>
</feature>
<feature type="glycosylation site" description="N-linked (GlcNAc...) asparagine" evidence="2">
    <location>
        <position position="178"/>
    </location>
</feature>
<feature type="disulfide bond" evidence="1">
    <location>
        <begin position="20"/>
        <end position="274"/>
    </location>
</feature>
<feature type="disulfide bond" evidence="3">
    <location>
        <begin position="103"/>
        <end position="182"/>
    </location>
</feature>